<name>BIR1F_MOUSE</name>
<accession>Q9JIB6</accession>
<accession>O09121</accession>
<accession>O09122</accession>
<accession>P81704</accession>
<accession>Q8CH68</accession>
<sequence>MAEHGESSEDRISEIDYEFLAELSARFGMNLVQLAKSQEEEDHKERMKMKKGFNSQMRSEAKRLKTFESYDTFRSWTPQEMAAAGFYHTGVKLGVQCFCCSLILFGNSLRKLPIERHKKLRPECEFLQGKDVGNIGKYDIRVKSPEKMLRGGKARYHEEEARLESFEDWPFYAHGTSPRALSAAGFVFTGKRDTVQCFSCGGSLGNWEEGDDPWKEHAKWFPKCEFLQSKKSSEEIAQYIQDYEGFVHVTGEHFVKSWVRRELPMVSAYCNDSVFTNEELRMDMFKDWPQESPVGFEALVRAGFFYTGKKDIVRCFSCGGCLEKWAEGDDPMEDHIKFFPECVFLQTLKSSAEVIPTLQSQYALPEATETTRESNHDDAAAVHSTVVDLGRSEAQWFQEARSLSEQLRDTYTKTSFCHMNLPEVCSSLGTDHLLGCDVSIISKHVSQPVQGALTIPEVFSNLSSVMCVEGEAGSGKTTFLKRIAFLWASGCCPLLYRFQLVFYLSLSSITPDQGLANIICTQLLGAGGCISEVCLSSSIQQLQHQVLFLLDDYSGLASLPQALHTLITKNYLFRTCLLIAVHTNRVRDIRPYLGTSLEIQEFPFYNTVFVLRKFFSHDIICVEKLIIYFSENKDLQGVYKTPLFVAAVCNDWNQNASAQDDFQDVTLFHSYMQYLSLKYKATAESLQATVSSCGQLALTGLFSSCFEFNSDDLAEAGVDEDVKLTTFLMSKFTAQRLRPVYRFLGPLFQEFLAAVRLTELLSSDRQEDQDLGLYYLRQIDSPLKAINSFNIFLYYVSSHSSSKAAPTVVSHLLQLVDEKESLENMSENEDYMKLHPQTFLWFQFVRGLWLVSPESFSSFVSEHLLRLALIFAYESNTVAECSPFILQFLRGRTLALRVLNLEYFWDHPESLLLLRSLKVSINGNKMSSYVDYSFKTYFENLQPPAINEEYTSAFEHVSEWRRNFAQDEEIIKNYENIWPRALPDISEGYWNLSPKPCKIPKLEVQVNNMGPADQALLQVLMEVFSASQSIEFHLFNSSGFLESIRPALELSKASVTKCSMSRLELSRAEQELLLTLPALQSLEVSETNQLPDQLFHNLHKFLGLKELCVRLDGKPDVLSVLPEEFLNLHHMEKLSIRTSTESDLSKLVKFIQNFPNLHVFHLKCDFLSNCESLMTALASCKKLREIEFSGQCFEAMTFVNILPNFVSLKILSLKGQQFADKETSEKFAQALGSLRNLEELLVPTGDGIHQVAKLIVRQCLQLPCLRVLAFHDILDDESVIEIARAATSGSFQKLENLDISMNHKITEEGYRNFFQALDNLPNLQMLNICRNIPGRIQVQATTVKALGHCVSRLPSLTRLGMLSWLLDEEDMKVINDVKERHPQSKRLTIFWKWIVPFSPVVLE</sequence>
<gene>
    <name type="primary">Naip6</name>
    <name type="synonym">Birc1f</name>
    <name type="synonym">Naip-rs4</name>
</gene>
<keyword id="KW-0053">Apoptosis</keyword>
<keyword id="KW-0067">ATP-binding</keyword>
<keyword id="KW-0391">Immunity</keyword>
<keyword id="KW-0395">Inflammatory response</keyword>
<keyword id="KW-0399">Innate immunity</keyword>
<keyword id="KW-0479">Metal-binding</keyword>
<keyword id="KW-0547">Nucleotide-binding</keyword>
<keyword id="KW-1185">Reference proteome</keyword>
<keyword id="KW-0677">Repeat</keyword>
<keyword id="KW-0862">Zinc</keyword>
<reference key="1">
    <citation type="journal article" date="2000" name="Genome Res.">
        <title>Genomic sequence analysis of the mouse Naip gene array.</title>
        <authorList>
            <person name="Endrizzi M.G."/>
            <person name="Hadinoto V."/>
            <person name="Growney J.D."/>
            <person name="Miller W."/>
            <person name="Dietrich W.F."/>
        </authorList>
    </citation>
    <scope>NUCLEOTIDE SEQUENCE [GENOMIC DNA]</scope>
</reference>
<reference key="2">
    <citation type="journal article" date="2003" name="Curr. Biol.">
        <title>Naip5 affects host susceptibility to the intracellular pathogen Legionella pneumophila.</title>
        <authorList>
            <person name="Wright E.K."/>
            <person name="Goodart S.A."/>
            <person name="Growney J.D."/>
            <person name="Hadinoto V."/>
            <person name="Endrizzi M.G."/>
            <person name="Long E.M."/>
            <person name="Sadigh K."/>
            <person name="Abney A.L."/>
            <person name="Bernstein-Hanley I."/>
            <person name="Dietrich W.F."/>
        </authorList>
    </citation>
    <scope>NUCLEOTIDE SEQUENCE [GENOMIC DNA]</scope>
    <source>
        <strain>C57BL/6J</strain>
    </source>
</reference>
<reference key="3">
    <citation type="journal article" date="2009" name="PLoS Biol.">
        <title>Lineage-specific biology revealed by a finished genome assembly of the mouse.</title>
        <authorList>
            <person name="Church D.M."/>
            <person name="Goodstadt L."/>
            <person name="Hillier L.W."/>
            <person name="Zody M.C."/>
            <person name="Goldstein S."/>
            <person name="She X."/>
            <person name="Bult C.J."/>
            <person name="Agarwala R."/>
            <person name="Cherry J.L."/>
            <person name="DiCuccio M."/>
            <person name="Hlavina W."/>
            <person name="Kapustin Y."/>
            <person name="Meric P."/>
            <person name="Maglott D."/>
            <person name="Birtle Z."/>
            <person name="Marques A.C."/>
            <person name="Graves T."/>
            <person name="Zhou S."/>
            <person name="Teague B."/>
            <person name="Potamousis K."/>
            <person name="Churas C."/>
            <person name="Place M."/>
            <person name="Herschleb J."/>
            <person name="Runnheim R."/>
            <person name="Forrest D."/>
            <person name="Amos-Landgraf J."/>
            <person name="Schwartz D.C."/>
            <person name="Cheng Z."/>
            <person name="Lindblad-Toh K."/>
            <person name="Eichler E.E."/>
            <person name="Ponting C.P."/>
        </authorList>
    </citation>
    <scope>NUCLEOTIDE SEQUENCE [LARGE SCALE GENOMIC DNA]</scope>
    <source>
        <strain>C57BL/6J</strain>
    </source>
</reference>
<reference key="4">
    <citation type="journal article" date="1996" name="Genomics">
        <title>The mouse region syntenic for human spinal muscular atrophy lies within the Lgn1 critical interval and contains multiple copies of Naip exon 5.</title>
        <authorList>
            <person name="Scharf J.M."/>
            <person name="Damron D."/>
            <person name="Frisella A."/>
            <person name="Bruno S."/>
            <person name="Beggs A.H."/>
            <person name="Kunkel L.M."/>
            <person name="Dietrich W.F."/>
        </authorList>
    </citation>
    <scope>NUCLEOTIDE SEQUENCE [GENOMIC DNA] OF 82-168</scope>
    <source>
        <strain>129/SvJ</strain>
    </source>
</reference>
<reference key="5">
    <citation type="journal article" date="2011" name="Nature">
        <title>Innate immune recognition of bacterial ligands by NAIPs determines inflammasome specificity.</title>
        <authorList>
            <person name="Kofoed E.M."/>
            <person name="Vance R.E."/>
        </authorList>
    </citation>
    <scope>FUNCTION</scope>
    <scope>SUBUNIT</scope>
    <scope>INTERACTION WITH S.TYPHIMURIUM FLAGELLIN</scope>
</reference>
<proteinExistence type="evidence at protein level"/>
<organism>
    <name type="scientific">Mus musculus</name>
    <name type="common">Mouse</name>
    <dbReference type="NCBI Taxonomy" id="10090"/>
    <lineage>
        <taxon>Eukaryota</taxon>
        <taxon>Metazoa</taxon>
        <taxon>Chordata</taxon>
        <taxon>Craniata</taxon>
        <taxon>Vertebrata</taxon>
        <taxon>Euteleostomi</taxon>
        <taxon>Mammalia</taxon>
        <taxon>Eutheria</taxon>
        <taxon>Euarchontoglires</taxon>
        <taxon>Glires</taxon>
        <taxon>Rodentia</taxon>
        <taxon>Myomorpha</taxon>
        <taxon>Muroidea</taxon>
        <taxon>Muridae</taxon>
        <taxon>Murinae</taxon>
        <taxon>Mus</taxon>
        <taxon>Mus</taxon>
    </lineage>
</organism>
<dbReference type="EMBL" id="AF242431">
    <property type="protein sequence ID" value="AAF82751.1"/>
    <property type="molecule type" value="Genomic_DNA"/>
</dbReference>
<dbReference type="EMBL" id="AF367969">
    <property type="protein sequence ID" value="AAN77617.1"/>
    <property type="molecule type" value="Genomic_DNA"/>
</dbReference>
<dbReference type="EMBL" id="CT009518">
    <property type="status" value="NOT_ANNOTATED_CDS"/>
    <property type="molecule type" value="Genomic_DNA"/>
</dbReference>
<dbReference type="EMBL" id="U66327">
    <property type="protein sequence ID" value="AAC52975.1"/>
    <property type="molecule type" value="Genomic_DNA"/>
</dbReference>
<dbReference type="CCDS" id="CCDS26728.1"/>
<dbReference type="RefSeq" id="NP_035001.2">
    <property type="nucleotide sequence ID" value="NM_010871.2"/>
</dbReference>
<dbReference type="SMR" id="Q9JIB6"/>
<dbReference type="BioGRID" id="201690">
    <property type="interactions" value="1"/>
</dbReference>
<dbReference type="DIP" id="DIP-59149N"/>
<dbReference type="FunCoup" id="Q9JIB6">
    <property type="interactions" value="28"/>
</dbReference>
<dbReference type="IntAct" id="Q9JIB6">
    <property type="interactions" value="4"/>
</dbReference>
<dbReference type="STRING" id="10090.ENSMUSP00000112867"/>
<dbReference type="MEROPS" id="I32.001"/>
<dbReference type="iPTMnet" id="Q9JIB6"/>
<dbReference type="PhosphoSitePlus" id="Q9JIB6"/>
<dbReference type="jPOST" id="Q9JIB6"/>
<dbReference type="PaxDb" id="10090-ENSMUSP00000112867"/>
<dbReference type="ProteomicsDB" id="273784"/>
<dbReference type="DNASU" id="17952"/>
<dbReference type="Ensembl" id="ENSMUST00000042220.3">
    <property type="protein sequence ID" value="ENSMUSP00000041766.3"/>
    <property type="gene ID" value="ENSMUSG00000078942.11"/>
</dbReference>
<dbReference type="Ensembl" id="ENSMUST00000118574.8">
    <property type="protein sequence ID" value="ENSMUSP00000112867.2"/>
    <property type="gene ID" value="ENSMUSG00000078942.11"/>
</dbReference>
<dbReference type="GeneID" id="17952"/>
<dbReference type="KEGG" id="mmu:17952"/>
<dbReference type="UCSC" id="uc007rqn.1">
    <property type="organism name" value="mouse"/>
</dbReference>
<dbReference type="AGR" id="MGI:1298222"/>
<dbReference type="CTD" id="17952"/>
<dbReference type="MGI" id="MGI:1298222">
    <property type="gene designation" value="Naip6"/>
</dbReference>
<dbReference type="VEuPathDB" id="HostDB:ENSMUSG00000078942"/>
<dbReference type="eggNOG" id="KOG1101">
    <property type="taxonomic scope" value="Eukaryota"/>
</dbReference>
<dbReference type="GeneTree" id="ENSGT00940000163369"/>
<dbReference type="HOGENOM" id="CLU_005648_0_0_1"/>
<dbReference type="InParanoid" id="Q9JIB6"/>
<dbReference type="OMA" id="RIMEPEQ"/>
<dbReference type="OrthoDB" id="4034597at2759"/>
<dbReference type="PhylomeDB" id="Q9JIB6"/>
<dbReference type="TreeFam" id="TF105356"/>
<dbReference type="BioGRID-ORCS" id="17952">
    <property type="hits" value="2 hits in 57 CRISPR screens"/>
</dbReference>
<dbReference type="PRO" id="PR:Q9JIB6"/>
<dbReference type="Proteomes" id="UP000000589">
    <property type="component" value="Chromosome 13"/>
</dbReference>
<dbReference type="RNAct" id="Q9JIB6">
    <property type="molecule type" value="protein"/>
</dbReference>
<dbReference type="Bgee" id="ENSMUSG00000078942">
    <property type="expression patterns" value="Expressed in epithelium of small intestine and 73 other cell types or tissues"/>
</dbReference>
<dbReference type="GO" id="GO:0072557">
    <property type="term" value="C:IPAF inflammasome complex"/>
    <property type="evidence" value="ECO:0000314"/>
    <property type="project" value="UniProtKB"/>
</dbReference>
<dbReference type="GO" id="GO:0005524">
    <property type="term" value="F:ATP binding"/>
    <property type="evidence" value="ECO:0000250"/>
    <property type="project" value="UniProtKB"/>
</dbReference>
<dbReference type="GO" id="GO:0043027">
    <property type="term" value="F:cysteine-type endopeptidase inhibitor activity involved in apoptotic process"/>
    <property type="evidence" value="ECO:0007669"/>
    <property type="project" value="InterPro"/>
</dbReference>
<dbReference type="GO" id="GO:0046872">
    <property type="term" value="F:metal ion binding"/>
    <property type="evidence" value="ECO:0007669"/>
    <property type="project" value="UniProtKB-KW"/>
</dbReference>
<dbReference type="GO" id="GO:0006915">
    <property type="term" value="P:apoptotic process"/>
    <property type="evidence" value="ECO:0007669"/>
    <property type="project" value="UniProtKB-KW"/>
</dbReference>
<dbReference type="GO" id="GO:0071391">
    <property type="term" value="P:cellular response to estrogen stimulus"/>
    <property type="evidence" value="ECO:0000314"/>
    <property type="project" value="MGI"/>
</dbReference>
<dbReference type="GO" id="GO:0042742">
    <property type="term" value="P:defense response to bacterium"/>
    <property type="evidence" value="ECO:0000315"/>
    <property type="project" value="UniProtKB"/>
</dbReference>
<dbReference type="GO" id="GO:0016045">
    <property type="term" value="P:detection of bacterium"/>
    <property type="evidence" value="ECO:0000315"/>
    <property type="project" value="UniProtKB"/>
</dbReference>
<dbReference type="GO" id="GO:0006954">
    <property type="term" value="P:inflammatory response"/>
    <property type="evidence" value="ECO:0000315"/>
    <property type="project" value="UniProtKB"/>
</dbReference>
<dbReference type="GO" id="GO:0045087">
    <property type="term" value="P:innate immune response"/>
    <property type="evidence" value="ECO:0007669"/>
    <property type="project" value="UniProtKB-KW"/>
</dbReference>
<dbReference type="GO" id="GO:0043066">
    <property type="term" value="P:negative regulation of apoptotic process"/>
    <property type="evidence" value="ECO:0007669"/>
    <property type="project" value="InterPro"/>
</dbReference>
<dbReference type="GO" id="GO:0070269">
    <property type="term" value="P:pyroptotic inflammatory response"/>
    <property type="evidence" value="ECO:0000315"/>
    <property type="project" value="UniProtKB"/>
</dbReference>
<dbReference type="CDD" id="cd00022">
    <property type="entry name" value="BIR"/>
    <property type="match status" value="3"/>
</dbReference>
<dbReference type="FunFam" id="1.10.1170.10:FF:000007">
    <property type="entry name" value="Baculoviral IAP repeat-containing protein 1"/>
    <property type="match status" value="2"/>
</dbReference>
<dbReference type="FunFam" id="1.10.1170.10:FF:000013">
    <property type="entry name" value="Baculoviral IAP repeat-containing protein 1"/>
    <property type="match status" value="1"/>
</dbReference>
<dbReference type="FunFam" id="3.40.50.300:FF:001126">
    <property type="entry name" value="Baculoviral IAP repeat-containing protein 1"/>
    <property type="match status" value="1"/>
</dbReference>
<dbReference type="FunFam" id="3.80.10.10:FF:000316">
    <property type="entry name" value="Baculoviral IAP repeat-containing protein 1"/>
    <property type="match status" value="1"/>
</dbReference>
<dbReference type="Gene3D" id="1.10.1170.10">
    <property type="entry name" value="Inhibitor Of Apoptosis Protein (2mihbC-IAP-1), Chain A"/>
    <property type="match status" value="3"/>
</dbReference>
<dbReference type="Gene3D" id="3.40.50.300">
    <property type="entry name" value="P-loop containing nucleotide triphosphate hydrolases"/>
    <property type="match status" value="1"/>
</dbReference>
<dbReference type="Gene3D" id="3.80.10.10">
    <property type="entry name" value="Ribonuclease Inhibitor"/>
    <property type="match status" value="1"/>
</dbReference>
<dbReference type="InterPro" id="IPR001370">
    <property type="entry name" value="BIR_rpt"/>
</dbReference>
<dbReference type="InterPro" id="IPR032675">
    <property type="entry name" value="LRR_dom_sf"/>
</dbReference>
<dbReference type="InterPro" id="IPR007111">
    <property type="entry name" value="NACHT_NTPase"/>
</dbReference>
<dbReference type="InterPro" id="IPR028789">
    <property type="entry name" value="Naip"/>
</dbReference>
<dbReference type="InterPro" id="IPR053882">
    <property type="entry name" value="Nlrc4-like_WHD"/>
</dbReference>
<dbReference type="InterPro" id="IPR040535">
    <property type="entry name" value="NLRC4_HD"/>
</dbReference>
<dbReference type="InterPro" id="IPR027417">
    <property type="entry name" value="P-loop_NTPase"/>
</dbReference>
<dbReference type="PANTHER" id="PTHR46914">
    <property type="entry name" value="BACULOVIRAL IAP REPEAT-CONTAINING PROTEIN 1"/>
    <property type="match status" value="1"/>
</dbReference>
<dbReference type="PANTHER" id="PTHR46914:SF1">
    <property type="entry name" value="BACULOVIRAL IAP REPEAT-CONTAINING PROTEIN 1"/>
    <property type="match status" value="1"/>
</dbReference>
<dbReference type="Pfam" id="PF00653">
    <property type="entry name" value="BIR"/>
    <property type="match status" value="3"/>
</dbReference>
<dbReference type="Pfam" id="PF05729">
    <property type="entry name" value="NACHT"/>
    <property type="match status" value="1"/>
</dbReference>
<dbReference type="Pfam" id="PF22524">
    <property type="entry name" value="Nlrc4-like_WHD"/>
    <property type="match status" value="1"/>
</dbReference>
<dbReference type="Pfam" id="PF17889">
    <property type="entry name" value="NLRC4_HD"/>
    <property type="match status" value="1"/>
</dbReference>
<dbReference type="SMART" id="SM00238">
    <property type="entry name" value="BIR"/>
    <property type="match status" value="3"/>
</dbReference>
<dbReference type="SUPFAM" id="SSF57924">
    <property type="entry name" value="Inhibitor of apoptosis (IAP) repeat"/>
    <property type="match status" value="3"/>
</dbReference>
<dbReference type="SUPFAM" id="SSF52540">
    <property type="entry name" value="P-loop containing nucleoside triphosphate hydrolases"/>
    <property type="match status" value="1"/>
</dbReference>
<dbReference type="SUPFAM" id="SSF52047">
    <property type="entry name" value="RNI-like"/>
    <property type="match status" value="1"/>
</dbReference>
<dbReference type="PROSITE" id="PS01282">
    <property type="entry name" value="BIR_REPEAT_1"/>
    <property type="match status" value="2"/>
</dbReference>
<dbReference type="PROSITE" id="PS50143">
    <property type="entry name" value="BIR_REPEAT_2"/>
    <property type="match status" value="3"/>
</dbReference>
<dbReference type="PROSITE" id="PS50837">
    <property type="entry name" value="NACHT"/>
    <property type="match status" value="1"/>
</dbReference>
<feature type="chain" id="PRO_0000122345" description="Baculoviral IAP repeat-containing protein 1f">
    <location>
        <begin position="1"/>
        <end position="1403"/>
    </location>
</feature>
<feature type="repeat" description="BIR 1">
    <location>
        <begin position="60"/>
        <end position="127"/>
    </location>
</feature>
<feature type="repeat" description="BIR 2">
    <location>
        <begin position="159"/>
        <end position="227"/>
    </location>
</feature>
<feature type="repeat" description="BIR 3">
    <location>
        <begin position="278"/>
        <end position="345"/>
    </location>
</feature>
<feature type="domain" description="NACHT" evidence="4">
    <location>
        <begin position="464"/>
        <end position="759"/>
    </location>
</feature>
<feature type="binding site" evidence="3">
    <location>
        <position position="315"/>
    </location>
    <ligand>
        <name>Zn(2+)</name>
        <dbReference type="ChEBI" id="CHEBI:29105"/>
    </ligand>
</feature>
<feature type="binding site" evidence="3">
    <location>
        <position position="318"/>
    </location>
    <ligand>
        <name>Zn(2+)</name>
        <dbReference type="ChEBI" id="CHEBI:29105"/>
    </ligand>
</feature>
<feature type="binding site" evidence="3">
    <location>
        <position position="335"/>
    </location>
    <ligand>
        <name>Zn(2+)</name>
        <dbReference type="ChEBI" id="CHEBI:29105"/>
    </ligand>
</feature>
<feature type="binding site" evidence="3">
    <location>
        <position position="342"/>
    </location>
    <ligand>
        <name>Zn(2+)</name>
        <dbReference type="ChEBI" id="CHEBI:29105"/>
    </ligand>
</feature>
<feature type="binding site" evidence="2">
    <location>
        <begin position="473"/>
        <end position="478"/>
    </location>
    <ligand>
        <name>ATP</name>
        <dbReference type="ChEBI" id="CHEBI:30616"/>
    </ligand>
</feature>
<feature type="sequence conflict" description="In Ref. 1; AAF82751." evidence="6" ref="1">
    <original>AR</original>
    <variation>GE</variation>
    <location>
        <begin position="1283"/>
        <end position="1284"/>
    </location>
</feature>
<comment type="function">
    <text evidence="1 5">Sensor component of the NLRC4 inflammasome that specifically recognizes and binds flagellin from pathogenic bacteria. Association of pathogenic bacteria proteins drives in turn drive assembly and activation of the NLRC4 inflammasome, promoting caspase-1 activation, cytokine production and macrophage pyroptosis. The NLRC4 inflammasome is activated as part of the innate immune response to a range of intracellular bacteria (PubMed:21874021). The NLRC4 inflammasome senses Gram-negative bacteria such as L.pneumophila and P.aeruginosa, enteric pathogens S.typhimurium (Salmonella) and S.flexneri. May contribute to prevent motor-neuron apoptosis induced by a variety of signals (By similarity).</text>
</comment>
<comment type="subunit">
    <text evidence="5">Component of the NLRC4 inflammasome, at least composed of NLRC4, caspase-1 (CASP1) and some NAIP protein.</text>
</comment>
<comment type="subunit">
    <text evidence="5">(Microbial infection) Interacts with S.typhimurium (Salmonella) flagellin.</text>
</comment>
<comment type="interaction">
    <interactant intactId="EBI-15944303">
        <id>Q9JIB6</id>
    </interactant>
    <interactant intactId="EBI-15944232">
        <id>Q48824</id>
        <label>flaA</label>
    </interactant>
    <organismsDiffer>true</organismsDiffer>
    <experiments>2</experiments>
</comment>
<protein>
    <recommendedName>
        <fullName>Baculoviral IAP repeat-containing protein 1f</fullName>
    </recommendedName>
    <alternativeName>
        <fullName>Neuronal apoptosis inhibitory protein 6</fullName>
    </alternativeName>
</protein>
<evidence type="ECO:0000250" key="1">
    <source>
        <dbReference type="UniProtKB" id="Q13075"/>
    </source>
</evidence>
<evidence type="ECO:0000250" key="2">
    <source>
        <dbReference type="UniProtKB" id="Q3UP24"/>
    </source>
</evidence>
<evidence type="ECO:0000255" key="3">
    <source>
        <dbReference type="PROSITE-ProRule" id="PRU00029"/>
    </source>
</evidence>
<evidence type="ECO:0000255" key="4">
    <source>
        <dbReference type="PROSITE-ProRule" id="PRU00136"/>
    </source>
</evidence>
<evidence type="ECO:0000269" key="5">
    <source>
    </source>
</evidence>
<evidence type="ECO:0000305" key="6"/>